<protein>
    <recommendedName>
        <fullName evidence="1">UPF0102 protein RPC_0320</fullName>
    </recommendedName>
</protein>
<accession>Q21CJ1</accession>
<organism>
    <name type="scientific">Rhodopseudomonas palustris (strain BisB18)</name>
    <dbReference type="NCBI Taxonomy" id="316056"/>
    <lineage>
        <taxon>Bacteria</taxon>
        <taxon>Pseudomonadati</taxon>
        <taxon>Pseudomonadota</taxon>
        <taxon>Alphaproteobacteria</taxon>
        <taxon>Hyphomicrobiales</taxon>
        <taxon>Nitrobacteraceae</taxon>
        <taxon>Rhodopseudomonas</taxon>
    </lineage>
</organism>
<sequence>MAKSSDARSPAPHAAAPERVAAFRTGISAEARAAAYLIAKGYRIVARRFRTPYGEIDLVARRRNLLAFVEVKARAKLDDAAYAVTPRQQQRIIDAAQAWLMAHPEHADFELRFDAVLIAPKSLPRHLPAAFDASP</sequence>
<feature type="chain" id="PRO_0000336250" description="UPF0102 protein RPC_0320">
    <location>
        <begin position="1"/>
        <end position="135"/>
    </location>
</feature>
<comment type="similarity">
    <text evidence="1">Belongs to the UPF0102 family.</text>
</comment>
<reference key="1">
    <citation type="submission" date="2006-03" db="EMBL/GenBank/DDBJ databases">
        <title>Complete sequence of Rhodopseudomonas palustris BisB18.</title>
        <authorList>
            <consortium name="US DOE Joint Genome Institute"/>
            <person name="Copeland A."/>
            <person name="Lucas S."/>
            <person name="Lapidus A."/>
            <person name="Barry K."/>
            <person name="Detter J.C."/>
            <person name="Glavina del Rio T."/>
            <person name="Hammon N."/>
            <person name="Israni S."/>
            <person name="Dalin E."/>
            <person name="Tice H."/>
            <person name="Pitluck S."/>
            <person name="Chain P."/>
            <person name="Malfatti S."/>
            <person name="Shin M."/>
            <person name="Vergez L."/>
            <person name="Schmutz J."/>
            <person name="Larimer F."/>
            <person name="Land M."/>
            <person name="Hauser L."/>
            <person name="Pelletier D.A."/>
            <person name="Kyrpides N."/>
            <person name="Anderson I."/>
            <person name="Oda Y."/>
            <person name="Harwood C.S."/>
            <person name="Richardson P."/>
        </authorList>
    </citation>
    <scope>NUCLEOTIDE SEQUENCE [LARGE SCALE GENOMIC DNA]</scope>
    <source>
        <strain>BisB18</strain>
    </source>
</reference>
<name>Y320_RHOPB</name>
<evidence type="ECO:0000255" key="1">
    <source>
        <dbReference type="HAMAP-Rule" id="MF_00048"/>
    </source>
</evidence>
<dbReference type="EMBL" id="CP000301">
    <property type="protein sequence ID" value="ABD85895.1"/>
    <property type="molecule type" value="Genomic_DNA"/>
</dbReference>
<dbReference type="SMR" id="Q21CJ1"/>
<dbReference type="STRING" id="316056.RPC_0320"/>
<dbReference type="KEGG" id="rpc:RPC_0320"/>
<dbReference type="eggNOG" id="COG0792">
    <property type="taxonomic scope" value="Bacteria"/>
</dbReference>
<dbReference type="HOGENOM" id="CLU_115353_0_2_5"/>
<dbReference type="OrthoDB" id="9812968at2"/>
<dbReference type="GO" id="GO:0003676">
    <property type="term" value="F:nucleic acid binding"/>
    <property type="evidence" value="ECO:0007669"/>
    <property type="project" value="InterPro"/>
</dbReference>
<dbReference type="CDD" id="cd20736">
    <property type="entry name" value="PoNe_Nuclease"/>
    <property type="match status" value="1"/>
</dbReference>
<dbReference type="Gene3D" id="3.40.1350.10">
    <property type="match status" value="1"/>
</dbReference>
<dbReference type="HAMAP" id="MF_00048">
    <property type="entry name" value="UPF0102"/>
    <property type="match status" value="1"/>
</dbReference>
<dbReference type="InterPro" id="IPR011335">
    <property type="entry name" value="Restrct_endonuc-II-like"/>
</dbReference>
<dbReference type="InterPro" id="IPR011856">
    <property type="entry name" value="tRNA_endonuc-like_dom_sf"/>
</dbReference>
<dbReference type="InterPro" id="IPR003509">
    <property type="entry name" value="UPF0102_YraN-like"/>
</dbReference>
<dbReference type="NCBIfam" id="NF009150">
    <property type="entry name" value="PRK12497.1-3"/>
    <property type="match status" value="1"/>
</dbReference>
<dbReference type="NCBIfam" id="NF009151">
    <property type="entry name" value="PRK12497.1-5"/>
    <property type="match status" value="1"/>
</dbReference>
<dbReference type="NCBIfam" id="TIGR00252">
    <property type="entry name" value="YraN family protein"/>
    <property type="match status" value="1"/>
</dbReference>
<dbReference type="PANTHER" id="PTHR34039">
    <property type="entry name" value="UPF0102 PROTEIN YRAN"/>
    <property type="match status" value="1"/>
</dbReference>
<dbReference type="PANTHER" id="PTHR34039:SF1">
    <property type="entry name" value="UPF0102 PROTEIN YRAN"/>
    <property type="match status" value="1"/>
</dbReference>
<dbReference type="Pfam" id="PF02021">
    <property type="entry name" value="UPF0102"/>
    <property type="match status" value="1"/>
</dbReference>
<dbReference type="SUPFAM" id="SSF52980">
    <property type="entry name" value="Restriction endonuclease-like"/>
    <property type="match status" value="1"/>
</dbReference>
<gene>
    <name type="ordered locus">RPC_0320</name>
</gene>
<proteinExistence type="inferred from homology"/>